<comment type="function">
    <text evidence="1">This is one of the proteins that bind and probably mediate the attachment of the 5S RNA into the large ribosomal subunit, where it forms part of the central protuberance.</text>
</comment>
<comment type="subunit">
    <text evidence="1">Part of the 50S ribosomal subunit; part of the 5S rRNA/L5/L18/L25 subcomplex. Contacts the 5S and 23S rRNAs.</text>
</comment>
<comment type="similarity">
    <text evidence="1">Belongs to the universal ribosomal protein uL18 family.</text>
</comment>
<reference key="1">
    <citation type="journal article" date="2009" name="J. Bacteriol.">
        <title>Complete genome sequence of the extremophilic Bacillus cereus strain Q1 with industrial applications.</title>
        <authorList>
            <person name="Xiong Z."/>
            <person name="Jiang Y."/>
            <person name="Qi D."/>
            <person name="Lu H."/>
            <person name="Yang F."/>
            <person name="Yang J."/>
            <person name="Chen L."/>
            <person name="Sun L."/>
            <person name="Xu X."/>
            <person name="Xue Y."/>
            <person name="Zhu Y."/>
            <person name="Jin Q."/>
        </authorList>
    </citation>
    <scope>NUCLEOTIDE SEQUENCE [LARGE SCALE GENOMIC DNA]</scope>
    <source>
        <strain>Q1</strain>
    </source>
</reference>
<name>RL18_BACCQ</name>
<protein>
    <recommendedName>
        <fullName evidence="1">Large ribosomal subunit protein uL18</fullName>
    </recommendedName>
    <alternativeName>
        <fullName evidence="2">50S ribosomal protein L18</fullName>
    </alternativeName>
</protein>
<keyword id="KW-0687">Ribonucleoprotein</keyword>
<keyword id="KW-0689">Ribosomal protein</keyword>
<keyword id="KW-0694">RNA-binding</keyword>
<keyword id="KW-0699">rRNA-binding</keyword>
<organism>
    <name type="scientific">Bacillus cereus (strain Q1)</name>
    <dbReference type="NCBI Taxonomy" id="361100"/>
    <lineage>
        <taxon>Bacteria</taxon>
        <taxon>Bacillati</taxon>
        <taxon>Bacillota</taxon>
        <taxon>Bacilli</taxon>
        <taxon>Bacillales</taxon>
        <taxon>Bacillaceae</taxon>
        <taxon>Bacillus</taxon>
        <taxon>Bacillus cereus group</taxon>
    </lineage>
</organism>
<dbReference type="EMBL" id="CP000227">
    <property type="protein sequence ID" value="ACM10654.1"/>
    <property type="molecule type" value="Genomic_DNA"/>
</dbReference>
<dbReference type="SMR" id="B9IZL0"/>
<dbReference type="KEGG" id="bcq:BCQ_0139"/>
<dbReference type="HOGENOM" id="CLU_098841_0_1_9"/>
<dbReference type="Proteomes" id="UP000000441">
    <property type="component" value="Chromosome"/>
</dbReference>
<dbReference type="GO" id="GO:0022625">
    <property type="term" value="C:cytosolic large ribosomal subunit"/>
    <property type="evidence" value="ECO:0007669"/>
    <property type="project" value="TreeGrafter"/>
</dbReference>
<dbReference type="GO" id="GO:0008097">
    <property type="term" value="F:5S rRNA binding"/>
    <property type="evidence" value="ECO:0007669"/>
    <property type="project" value="TreeGrafter"/>
</dbReference>
<dbReference type="GO" id="GO:0003735">
    <property type="term" value="F:structural constituent of ribosome"/>
    <property type="evidence" value="ECO:0007669"/>
    <property type="project" value="InterPro"/>
</dbReference>
<dbReference type="GO" id="GO:0006412">
    <property type="term" value="P:translation"/>
    <property type="evidence" value="ECO:0007669"/>
    <property type="project" value="UniProtKB-UniRule"/>
</dbReference>
<dbReference type="CDD" id="cd00432">
    <property type="entry name" value="Ribosomal_L18_L5e"/>
    <property type="match status" value="1"/>
</dbReference>
<dbReference type="FunFam" id="3.30.420.100:FF:000001">
    <property type="entry name" value="50S ribosomal protein L18"/>
    <property type="match status" value="1"/>
</dbReference>
<dbReference type="Gene3D" id="3.30.420.100">
    <property type="match status" value="1"/>
</dbReference>
<dbReference type="HAMAP" id="MF_01337_B">
    <property type="entry name" value="Ribosomal_uL18_B"/>
    <property type="match status" value="1"/>
</dbReference>
<dbReference type="InterPro" id="IPR004389">
    <property type="entry name" value="Ribosomal_uL18_bac-type"/>
</dbReference>
<dbReference type="InterPro" id="IPR005484">
    <property type="entry name" value="Ribosomal_uL18_bac/euk"/>
</dbReference>
<dbReference type="NCBIfam" id="TIGR00060">
    <property type="entry name" value="L18_bact"/>
    <property type="match status" value="1"/>
</dbReference>
<dbReference type="PANTHER" id="PTHR12899">
    <property type="entry name" value="39S RIBOSOMAL PROTEIN L18, MITOCHONDRIAL"/>
    <property type="match status" value="1"/>
</dbReference>
<dbReference type="PANTHER" id="PTHR12899:SF3">
    <property type="entry name" value="LARGE RIBOSOMAL SUBUNIT PROTEIN UL18M"/>
    <property type="match status" value="1"/>
</dbReference>
<dbReference type="Pfam" id="PF00861">
    <property type="entry name" value="Ribosomal_L18p"/>
    <property type="match status" value="1"/>
</dbReference>
<dbReference type="SUPFAM" id="SSF53137">
    <property type="entry name" value="Translational machinery components"/>
    <property type="match status" value="1"/>
</dbReference>
<sequence>MITKADKNATRKKRHARVRAKLTGTAERPRLNVFRSNQHIYAQVIDDVNGVTLVSASTLDKDLALNGTSNIEAATKVGESVAKRAVEKGVKEVVFDRGGYLYHGRVKALAEAAREAGLQF</sequence>
<evidence type="ECO:0000255" key="1">
    <source>
        <dbReference type="HAMAP-Rule" id="MF_01337"/>
    </source>
</evidence>
<evidence type="ECO:0000305" key="2"/>
<gene>
    <name evidence="1" type="primary">rplR</name>
    <name type="ordered locus">BCQ_0139</name>
</gene>
<accession>B9IZL0</accession>
<feature type="chain" id="PRO_1000166206" description="Large ribosomal subunit protein uL18">
    <location>
        <begin position="1"/>
        <end position="120"/>
    </location>
</feature>
<proteinExistence type="inferred from homology"/>